<gene>
    <name evidence="3" type="primary">MPSS3</name>
</gene>
<feature type="transit peptide" description="Mitochondrion" evidence="1">
    <location>
        <begin position="1"/>
        <end position="97"/>
    </location>
</feature>
<feature type="chain" id="PRO_0000450684" description="Mitochondrial 3' processome subunit 3" evidence="1">
    <location>
        <begin position="98"/>
        <end position="1136"/>
    </location>
</feature>
<reference evidence="4" key="1">
    <citation type="journal article" date="2016" name="Mol. Cell">
        <title>Antisense Transcripts Delimit Exonucleolytic Activity of the Mitochondrial 3' Processome to Generate Guide RNAs.</title>
        <authorList>
            <person name="Suematsu T."/>
            <person name="Zhang L."/>
            <person name="Aphasizheva I."/>
            <person name="Monti S."/>
            <person name="Huang L."/>
            <person name="Wang Q."/>
            <person name="Costello C.E."/>
            <person name="Aphasizhev R."/>
        </authorList>
    </citation>
    <scope>NUCLEOTIDE SEQUENCE [GENOMIC DNA]</scope>
    <scope>FUNCTION</scope>
    <scope>IDENTIFICATION IN THE MPSOME COMPLEX</scope>
    <scope>INTERACTION WITH KRET1</scope>
    <scope>SUBCELLULAR LOCATION</scope>
    <scope>DEVELOPMENTAL STAGE</scope>
    <scope>IDENTIFICATION BY MASS SPECTROMETRY</scope>
    <scope>DISRUPTION PHENOTYPE</scope>
</reference>
<protein>
    <recommendedName>
        <fullName evidence="3">Mitochondrial 3' processome subunit 3</fullName>
    </recommendedName>
</protein>
<name>MPSS3_TRYBB</name>
<proteinExistence type="evidence at protein level"/>
<organism>
    <name type="scientific">Trypanosoma brucei brucei</name>
    <dbReference type="NCBI Taxonomy" id="5702"/>
    <lineage>
        <taxon>Eukaryota</taxon>
        <taxon>Discoba</taxon>
        <taxon>Euglenozoa</taxon>
        <taxon>Kinetoplastea</taxon>
        <taxon>Metakinetoplastina</taxon>
        <taxon>Trypanosomatida</taxon>
        <taxon>Trypanosomatidae</taxon>
        <taxon>Trypanosoma</taxon>
    </lineage>
</organism>
<accession>A0A120KVW2</accession>
<sequence>MKKAWAQLERVLQPSSSRVNRALITQQLEALYALPINCEAACRWEDAQRLFLRCNGHRPYYAGIMDQSTDNRLAVASFEENMLALQQRGLVCTTVGDKAPPCVVGGQTSRGLCRRSSIVCVNVGSCADLDLNMHEDCDETLLTLLHGVVVPYLHFRIVYGTGVSPPLVPRAPGPAICGASHDLSLQNELHMDSCVALLHPRGLCSSNCNNKAYRTAATLVRGAVSLATSDTLLHQRQDGCFTLHPDAMKLGSPRLFALQLWWNKEVGPVIQRGVEQSVKTDEVLSGAWIEVARKRVEELVERGGDDLPQPLRNMTRDDVAAFAADATLCWTLSAFDCNYKRLGPAQPACRLQFSEEARLSMALELMQTVKASLVKQPTGIPISELSATVCWPAASAWIGEKSLTEALTQFPAHFNVVNVEGKLVVMHGHLTGPSDNVTAEEVSEWLAAGHSEGLQKPCVAASPSDLTFHRETDLVVRAVAFLRKRHFGNVPVTYGELCGALLPKNNGKNDGDSDTLLNVLLRYDVLAADTAKGDSSINIQCGLRDGDAIRLSVREDRALRALEAFRTTSRSAFQLYTEAIEPFLTCCRGAMRENGSCVVPLTLLERWLQVERLSLQSKELLDILRSAEGPYRIDEELCNVVLTNHTAKGEVLTPAFSLPATPPPPPPPAVSSRLTFEAQISRVLKTQRPDRLLHFVQTILHAVFDLILPHVSAPSGVPVRMLMRRIRWGSFVVTLGSLTSFVEAFDGLFFEVLSNASSHGEEKRDDVDLIVSAYKGPVSPWLLYARLIVRLFPADVDIPLGLIAEALSWSSRFAPMFGDLPSLLRRVGRQCRNGQLLAKVEMVRPVCDQDDACLWELLAKIRREAHLHHLERSSGETGQYVLLSETELYAYLPNDVKGERWNSTVKEEGARCLATMAVHRLPHFFEWHVDNTDTTTRYVRVVLPFSTPPTGVVCFVEEYVCPLLRQHKQTTIAELDEQLGWSHGAFDAHPAGSQAAGGTPSATSLCGLLRRYVESMHSPKIILEPQETTLSPLHHHVHVMPNSAVYTSPEDMLLLLNGLRISNEGITRVLPTHKPVSLFELISQQLDLHQPFREGLTTLERGSRWNVMLACESDSMDDCLQELDNCTGDILVWCEG</sequence>
<evidence type="ECO:0000255" key="1"/>
<evidence type="ECO:0000269" key="2">
    <source>
    </source>
</evidence>
<evidence type="ECO:0000303" key="3">
    <source>
    </source>
</evidence>
<evidence type="ECO:0000312" key="4">
    <source>
        <dbReference type="EMBL" id="AME15292.1"/>
    </source>
</evidence>
<dbReference type="EMBL" id="KT282122">
    <property type="protein sequence ID" value="AME15292.1"/>
    <property type="molecule type" value="Genomic_DNA"/>
</dbReference>
<dbReference type="GO" id="GO:0005739">
    <property type="term" value="C:mitochondrion"/>
    <property type="evidence" value="ECO:0000314"/>
    <property type="project" value="UniProtKB"/>
</dbReference>
<dbReference type="GO" id="GO:0032991">
    <property type="term" value="C:protein-containing complex"/>
    <property type="evidence" value="ECO:0000314"/>
    <property type="project" value="UniProtKB"/>
</dbReference>
<dbReference type="GO" id="GO:0080156">
    <property type="term" value="P:mitochondrial mRNA modification"/>
    <property type="evidence" value="ECO:0000315"/>
    <property type="project" value="UniProtKB"/>
</dbReference>
<dbReference type="CDD" id="cd23671">
    <property type="entry name" value="MPSS3"/>
    <property type="match status" value="1"/>
</dbReference>
<keyword id="KW-0496">Mitochondrion</keyword>
<keyword id="KW-0809">Transit peptide</keyword>
<comment type="function">
    <text evidence="2">As part of the mitochondrial 3' processome (MPsome), involved in the maturation of guided RNA (gRNA) precursors.</text>
</comment>
<comment type="subunit">
    <text evidence="2">Component of the mitochondrial 3' processome (MPsome) complex composed at least of terminal uridylyltransferase KRET1/TUT1, 3'-5' exonuclease DSS1, MPSS1, MPSS2 and MPSS3 (PubMed:26833087). Within the complex, interacts with KRET1 (PubMed:26833087).</text>
</comment>
<comment type="subcellular location">
    <subcellularLocation>
        <location evidence="2">Mitochondrion</location>
    </subcellularLocation>
</comment>
<comment type="developmental stage">
    <text evidence="2">Expressed at the procyclic stage (at protein level).</text>
</comment>
<comment type="disruption phenotype">
    <text evidence="2">RNAi-mediated knockdown at the procyclic stage causes moderate growth defect without affecting the production of guided RNAs (gRNA).</text>
</comment>